<feature type="chain" id="PRO_0000263923" description="Argininosuccinate synthase">
    <location>
        <begin position="1"/>
        <end position="393"/>
    </location>
</feature>
<feature type="binding site" evidence="1">
    <location>
        <begin position="7"/>
        <end position="15"/>
    </location>
    <ligand>
        <name>ATP</name>
        <dbReference type="ChEBI" id="CHEBI:30616"/>
    </ligand>
</feature>
<feature type="binding site" evidence="1">
    <location>
        <position position="34"/>
    </location>
    <ligand>
        <name>ATP</name>
        <dbReference type="ChEBI" id="CHEBI:30616"/>
    </ligand>
</feature>
<feature type="binding site" evidence="1">
    <location>
        <position position="85"/>
    </location>
    <ligand>
        <name>L-citrulline</name>
        <dbReference type="ChEBI" id="CHEBI:57743"/>
    </ligand>
</feature>
<feature type="binding site" evidence="1">
    <location>
        <position position="90"/>
    </location>
    <ligand>
        <name>L-citrulline</name>
        <dbReference type="ChEBI" id="CHEBI:57743"/>
    </ligand>
</feature>
<feature type="binding site" evidence="1">
    <location>
        <position position="115"/>
    </location>
    <ligand>
        <name>ATP</name>
        <dbReference type="ChEBI" id="CHEBI:30616"/>
    </ligand>
</feature>
<feature type="binding site" evidence="1">
    <location>
        <position position="117"/>
    </location>
    <ligand>
        <name>L-aspartate</name>
        <dbReference type="ChEBI" id="CHEBI:29991"/>
    </ligand>
</feature>
<feature type="binding site" evidence="1">
    <location>
        <position position="121"/>
    </location>
    <ligand>
        <name>L-aspartate</name>
        <dbReference type="ChEBI" id="CHEBI:29991"/>
    </ligand>
</feature>
<feature type="binding site" evidence="1">
    <location>
        <position position="121"/>
    </location>
    <ligand>
        <name>L-citrulline</name>
        <dbReference type="ChEBI" id="CHEBI:57743"/>
    </ligand>
</feature>
<feature type="binding site" evidence="1">
    <location>
        <position position="122"/>
    </location>
    <ligand>
        <name>L-aspartate</name>
        <dbReference type="ChEBI" id="CHEBI:29991"/>
    </ligand>
</feature>
<feature type="binding site" evidence="1">
    <location>
        <position position="125"/>
    </location>
    <ligand>
        <name>L-citrulline</name>
        <dbReference type="ChEBI" id="CHEBI:57743"/>
    </ligand>
</feature>
<feature type="binding site" evidence="1">
    <location>
        <position position="176"/>
    </location>
    <ligand>
        <name>L-citrulline</name>
        <dbReference type="ChEBI" id="CHEBI:57743"/>
    </ligand>
</feature>
<feature type="binding site" evidence="1">
    <location>
        <position position="185"/>
    </location>
    <ligand>
        <name>L-citrulline</name>
        <dbReference type="ChEBI" id="CHEBI:57743"/>
    </ligand>
</feature>
<feature type="binding site" evidence="1">
    <location>
        <position position="261"/>
    </location>
    <ligand>
        <name>L-citrulline</name>
        <dbReference type="ChEBI" id="CHEBI:57743"/>
    </ligand>
</feature>
<feature type="binding site" evidence="1">
    <location>
        <position position="273"/>
    </location>
    <ligand>
        <name>L-citrulline</name>
        <dbReference type="ChEBI" id="CHEBI:57743"/>
    </ligand>
</feature>
<reference key="1">
    <citation type="journal article" date="2006" name="J. Bacteriol.">
        <title>The genome of the obligately intracellular bacterium Ehrlichia canis reveals themes of complex membrane structure and immune evasion strategies.</title>
        <authorList>
            <person name="Mavromatis K."/>
            <person name="Doyle C.K."/>
            <person name="Lykidis A."/>
            <person name="Ivanova N."/>
            <person name="Francino M.P."/>
            <person name="Chain P."/>
            <person name="Shin M."/>
            <person name="Malfatti S."/>
            <person name="Larimer F."/>
            <person name="Copeland A."/>
            <person name="Detter J.C."/>
            <person name="Land M."/>
            <person name="Richardson P.M."/>
            <person name="Yu X.J."/>
            <person name="Walker D.H."/>
            <person name="McBride J.W."/>
            <person name="Kyrpides N.C."/>
        </authorList>
    </citation>
    <scope>NUCLEOTIDE SEQUENCE [LARGE SCALE GENOMIC DNA]</scope>
    <source>
        <strain>Jake</strain>
    </source>
</reference>
<evidence type="ECO:0000255" key="1">
    <source>
        <dbReference type="HAMAP-Rule" id="MF_00005"/>
    </source>
</evidence>
<name>ASSY_EHRCJ</name>
<gene>
    <name evidence="1" type="primary">argG</name>
    <name type="ordered locus">Ecaj_0367</name>
</gene>
<keyword id="KW-0028">Amino-acid biosynthesis</keyword>
<keyword id="KW-0055">Arginine biosynthesis</keyword>
<keyword id="KW-0067">ATP-binding</keyword>
<keyword id="KW-0963">Cytoplasm</keyword>
<keyword id="KW-0436">Ligase</keyword>
<keyword id="KW-0547">Nucleotide-binding</keyword>
<sequence length="393" mass="44353">MKKIVLAYSGGLDTSVILKWLQENYNCEVVVFTADLGQDDDMSVIRQKATALNVKEIFIEDLKEEFVKDFVFPMFRANTVYEGYYLLGTSIARPLIAKRQIEIAKLTGADTVAHGATGKGNDQIRFEFGYYCCNPNIKVIAPWRQWKLTSRNSLIEYAKKHGINVPLDKSSEPPYSIDANLLHTSYEGKSLEDPYVEPDYTILSKSVTPELASDTPEYIEISFEKGDPCAINNIPLSPANLLKQLNTIGGKHGIGIIDIVENRYVGIKSRGIYETPGGTILLHAHRAIESITLDREAAHLKDEIMPKYAKLIYNGYWWTTERKMLQALIDRSQEKVNGVVRLKLYKGSVIVVGRKSENSLYSHNLASFDLSEDYNHTDAEGFIKINSLRLRNC</sequence>
<organism>
    <name type="scientific">Ehrlichia canis (strain Jake)</name>
    <dbReference type="NCBI Taxonomy" id="269484"/>
    <lineage>
        <taxon>Bacteria</taxon>
        <taxon>Pseudomonadati</taxon>
        <taxon>Pseudomonadota</taxon>
        <taxon>Alphaproteobacteria</taxon>
        <taxon>Rickettsiales</taxon>
        <taxon>Anaplasmataceae</taxon>
        <taxon>Ehrlichia</taxon>
    </lineage>
</organism>
<proteinExistence type="inferred from homology"/>
<dbReference type="EC" id="6.3.4.5" evidence="1"/>
<dbReference type="EMBL" id="CP000107">
    <property type="protein sequence ID" value="AAZ68410.1"/>
    <property type="molecule type" value="Genomic_DNA"/>
</dbReference>
<dbReference type="RefSeq" id="WP_011304488.1">
    <property type="nucleotide sequence ID" value="NC_007354.1"/>
</dbReference>
<dbReference type="SMR" id="Q3YS95"/>
<dbReference type="FunCoup" id="Q3YS95">
    <property type="interactions" value="280"/>
</dbReference>
<dbReference type="STRING" id="269484.Ecaj_0367"/>
<dbReference type="KEGG" id="ecn:Ecaj_0367"/>
<dbReference type="eggNOG" id="COG0137">
    <property type="taxonomic scope" value="Bacteria"/>
</dbReference>
<dbReference type="HOGENOM" id="CLU_032784_4_2_5"/>
<dbReference type="InParanoid" id="Q3YS95"/>
<dbReference type="UniPathway" id="UPA00068">
    <property type="reaction ID" value="UER00113"/>
</dbReference>
<dbReference type="Proteomes" id="UP000000435">
    <property type="component" value="Chromosome"/>
</dbReference>
<dbReference type="GO" id="GO:0005737">
    <property type="term" value="C:cytoplasm"/>
    <property type="evidence" value="ECO:0007669"/>
    <property type="project" value="UniProtKB-SubCell"/>
</dbReference>
<dbReference type="GO" id="GO:0004055">
    <property type="term" value="F:argininosuccinate synthase activity"/>
    <property type="evidence" value="ECO:0007669"/>
    <property type="project" value="UniProtKB-UniRule"/>
</dbReference>
<dbReference type="GO" id="GO:0005524">
    <property type="term" value="F:ATP binding"/>
    <property type="evidence" value="ECO:0007669"/>
    <property type="project" value="UniProtKB-UniRule"/>
</dbReference>
<dbReference type="GO" id="GO:0000053">
    <property type="term" value="P:argininosuccinate metabolic process"/>
    <property type="evidence" value="ECO:0007669"/>
    <property type="project" value="TreeGrafter"/>
</dbReference>
<dbReference type="GO" id="GO:0006526">
    <property type="term" value="P:L-arginine biosynthetic process"/>
    <property type="evidence" value="ECO:0007669"/>
    <property type="project" value="UniProtKB-UniRule"/>
</dbReference>
<dbReference type="GO" id="GO:0000050">
    <property type="term" value="P:urea cycle"/>
    <property type="evidence" value="ECO:0007669"/>
    <property type="project" value="TreeGrafter"/>
</dbReference>
<dbReference type="CDD" id="cd01999">
    <property type="entry name" value="ASS"/>
    <property type="match status" value="1"/>
</dbReference>
<dbReference type="FunFam" id="3.40.50.620:FF:000019">
    <property type="entry name" value="Argininosuccinate synthase"/>
    <property type="match status" value="1"/>
</dbReference>
<dbReference type="FunFam" id="3.90.1260.10:FF:000007">
    <property type="entry name" value="Argininosuccinate synthase"/>
    <property type="match status" value="1"/>
</dbReference>
<dbReference type="Gene3D" id="3.90.1260.10">
    <property type="entry name" value="Argininosuccinate synthetase, chain A, domain 2"/>
    <property type="match status" value="1"/>
</dbReference>
<dbReference type="Gene3D" id="3.40.50.620">
    <property type="entry name" value="HUPs"/>
    <property type="match status" value="1"/>
</dbReference>
<dbReference type="Gene3D" id="1.20.5.470">
    <property type="entry name" value="Single helix bin"/>
    <property type="match status" value="1"/>
</dbReference>
<dbReference type="HAMAP" id="MF_00005">
    <property type="entry name" value="Arg_succ_synth_type1"/>
    <property type="match status" value="1"/>
</dbReference>
<dbReference type="InterPro" id="IPR048268">
    <property type="entry name" value="Arginosuc_syn_C"/>
</dbReference>
<dbReference type="InterPro" id="IPR048267">
    <property type="entry name" value="Arginosuc_syn_N"/>
</dbReference>
<dbReference type="InterPro" id="IPR001518">
    <property type="entry name" value="Arginosuc_synth"/>
</dbReference>
<dbReference type="InterPro" id="IPR018223">
    <property type="entry name" value="Arginosuc_synth_CS"/>
</dbReference>
<dbReference type="InterPro" id="IPR023434">
    <property type="entry name" value="Arginosuc_synth_type_1_subfam"/>
</dbReference>
<dbReference type="InterPro" id="IPR024074">
    <property type="entry name" value="AS_cat/multimer_dom_body"/>
</dbReference>
<dbReference type="InterPro" id="IPR014729">
    <property type="entry name" value="Rossmann-like_a/b/a_fold"/>
</dbReference>
<dbReference type="NCBIfam" id="TIGR00032">
    <property type="entry name" value="argG"/>
    <property type="match status" value="1"/>
</dbReference>
<dbReference type="NCBIfam" id="NF001770">
    <property type="entry name" value="PRK00509.1"/>
    <property type="match status" value="1"/>
</dbReference>
<dbReference type="PANTHER" id="PTHR11587">
    <property type="entry name" value="ARGININOSUCCINATE SYNTHASE"/>
    <property type="match status" value="1"/>
</dbReference>
<dbReference type="PANTHER" id="PTHR11587:SF2">
    <property type="entry name" value="ARGININOSUCCINATE SYNTHASE"/>
    <property type="match status" value="1"/>
</dbReference>
<dbReference type="Pfam" id="PF20979">
    <property type="entry name" value="Arginosuc_syn_C"/>
    <property type="match status" value="1"/>
</dbReference>
<dbReference type="Pfam" id="PF00764">
    <property type="entry name" value="Arginosuc_synth"/>
    <property type="match status" value="1"/>
</dbReference>
<dbReference type="SUPFAM" id="SSF52402">
    <property type="entry name" value="Adenine nucleotide alpha hydrolases-like"/>
    <property type="match status" value="1"/>
</dbReference>
<dbReference type="SUPFAM" id="SSF69864">
    <property type="entry name" value="Argininosuccinate synthetase, C-terminal domain"/>
    <property type="match status" value="1"/>
</dbReference>
<dbReference type="PROSITE" id="PS00564">
    <property type="entry name" value="ARGININOSUCCIN_SYN_1"/>
    <property type="match status" value="1"/>
</dbReference>
<dbReference type="PROSITE" id="PS00565">
    <property type="entry name" value="ARGININOSUCCIN_SYN_2"/>
    <property type="match status" value="1"/>
</dbReference>
<comment type="catalytic activity">
    <reaction evidence="1">
        <text>L-citrulline + L-aspartate + ATP = 2-(N(omega)-L-arginino)succinate + AMP + diphosphate + H(+)</text>
        <dbReference type="Rhea" id="RHEA:10932"/>
        <dbReference type="ChEBI" id="CHEBI:15378"/>
        <dbReference type="ChEBI" id="CHEBI:29991"/>
        <dbReference type="ChEBI" id="CHEBI:30616"/>
        <dbReference type="ChEBI" id="CHEBI:33019"/>
        <dbReference type="ChEBI" id="CHEBI:57472"/>
        <dbReference type="ChEBI" id="CHEBI:57743"/>
        <dbReference type="ChEBI" id="CHEBI:456215"/>
        <dbReference type="EC" id="6.3.4.5"/>
    </reaction>
</comment>
<comment type="pathway">
    <text evidence="1">Amino-acid biosynthesis; L-arginine biosynthesis; L-arginine from L-ornithine and carbamoyl phosphate: step 2/3.</text>
</comment>
<comment type="subunit">
    <text evidence="1">Homotetramer.</text>
</comment>
<comment type="subcellular location">
    <subcellularLocation>
        <location evidence="1">Cytoplasm</location>
    </subcellularLocation>
</comment>
<comment type="similarity">
    <text evidence="1">Belongs to the argininosuccinate synthase family. Type 1 subfamily.</text>
</comment>
<accession>Q3YS95</accession>
<protein>
    <recommendedName>
        <fullName evidence="1">Argininosuccinate synthase</fullName>
        <ecNumber evidence="1">6.3.4.5</ecNumber>
    </recommendedName>
    <alternativeName>
        <fullName evidence="1">Citrulline--aspartate ligase</fullName>
    </alternativeName>
</protein>